<proteinExistence type="inferred from homology"/>
<gene>
    <name evidence="1" type="primary">atpD</name>
    <name type="ordered locus">NGK_2626</name>
</gene>
<accession>B4RJG0</accession>
<name>ATPB_NEIG2</name>
<keyword id="KW-0066">ATP synthesis</keyword>
<keyword id="KW-0067">ATP-binding</keyword>
<keyword id="KW-0997">Cell inner membrane</keyword>
<keyword id="KW-1003">Cell membrane</keyword>
<keyword id="KW-0139">CF(1)</keyword>
<keyword id="KW-0375">Hydrogen ion transport</keyword>
<keyword id="KW-0406">Ion transport</keyword>
<keyword id="KW-0472">Membrane</keyword>
<keyword id="KW-0547">Nucleotide-binding</keyword>
<keyword id="KW-1278">Translocase</keyword>
<keyword id="KW-0813">Transport</keyword>
<dbReference type="EC" id="7.1.2.2" evidence="1"/>
<dbReference type="EMBL" id="CP001050">
    <property type="protein sequence ID" value="ACF31225.1"/>
    <property type="molecule type" value="Genomic_DNA"/>
</dbReference>
<dbReference type="RefSeq" id="WP_003690451.1">
    <property type="nucleotide sequence ID" value="NC_011035.1"/>
</dbReference>
<dbReference type="SMR" id="B4RJG0"/>
<dbReference type="GeneID" id="66754479"/>
<dbReference type="KEGG" id="ngk:NGK_2626"/>
<dbReference type="HOGENOM" id="CLU_022398_0_2_4"/>
<dbReference type="Proteomes" id="UP000002564">
    <property type="component" value="Chromosome"/>
</dbReference>
<dbReference type="GO" id="GO:0005886">
    <property type="term" value="C:plasma membrane"/>
    <property type="evidence" value="ECO:0007669"/>
    <property type="project" value="UniProtKB-SubCell"/>
</dbReference>
<dbReference type="GO" id="GO:0045259">
    <property type="term" value="C:proton-transporting ATP synthase complex"/>
    <property type="evidence" value="ECO:0007669"/>
    <property type="project" value="UniProtKB-KW"/>
</dbReference>
<dbReference type="GO" id="GO:0005524">
    <property type="term" value="F:ATP binding"/>
    <property type="evidence" value="ECO:0007669"/>
    <property type="project" value="UniProtKB-UniRule"/>
</dbReference>
<dbReference type="GO" id="GO:0016887">
    <property type="term" value="F:ATP hydrolysis activity"/>
    <property type="evidence" value="ECO:0007669"/>
    <property type="project" value="InterPro"/>
</dbReference>
<dbReference type="GO" id="GO:0046933">
    <property type="term" value="F:proton-transporting ATP synthase activity, rotational mechanism"/>
    <property type="evidence" value="ECO:0007669"/>
    <property type="project" value="UniProtKB-UniRule"/>
</dbReference>
<dbReference type="CDD" id="cd18110">
    <property type="entry name" value="ATP-synt_F1_beta_C"/>
    <property type="match status" value="1"/>
</dbReference>
<dbReference type="CDD" id="cd18115">
    <property type="entry name" value="ATP-synt_F1_beta_N"/>
    <property type="match status" value="1"/>
</dbReference>
<dbReference type="CDD" id="cd01133">
    <property type="entry name" value="F1-ATPase_beta_CD"/>
    <property type="match status" value="1"/>
</dbReference>
<dbReference type="FunFam" id="1.10.1140.10:FF:000001">
    <property type="entry name" value="ATP synthase subunit beta"/>
    <property type="match status" value="1"/>
</dbReference>
<dbReference type="FunFam" id="2.40.10.170:FF:000003">
    <property type="entry name" value="ATP synthase subunit beta"/>
    <property type="match status" value="1"/>
</dbReference>
<dbReference type="FunFam" id="3.40.50.300:FF:000004">
    <property type="entry name" value="ATP synthase subunit beta"/>
    <property type="match status" value="1"/>
</dbReference>
<dbReference type="Gene3D" id="2.40.10.170">
    <property type="match status" value="1"/>
</dbReference>
<dbReference type="Gene3D" id="1.10.1140.10">
    <property type="entry name" value="Bovine Mitochondrial F1-atpase, Atp Synthase Beta Chain, Chain D, domain 3"/>
    <property type="match status" value="1"/>
</dbReference>
<dbReference type="Gene3D" id="3.40.50.300">
    <property type="entry name" value="P-loop containing nucleotide triphosphate hydrolases"/>
    <property type="match status" value="1"/>
</dbReference>
<dbReference type="HAMAP" id="MF_01347">
    <property type="entry name" value="ATP_synth_beta_bact"/>
    <property type="match status" value="1"/>
</dbReference>
<dbReference type="InterPro" id="IPR003593">
    <property type="entry name" value="AAA+_ATPase"/>
</dbReference>
<dbReference type="InterPro" id="IPR055190">
    <property type="entry name" value="ATP-synt_VA_C"/>
</dbReference>
<dbReference type="InterPro" id="IPR005722">
    <property type="entry name" value="ATP_synth_F1_bsu"/>
</dbReference>
<dbReference type="InterPro" id="IPR020003">
    <property type="entry name" value="ATPase_a/bsu_AS"/>
</dbReference>
<dbReference type="InterPro" id="IPR050053">
    <property type="entry name" value="ATPase_alpha/beta_chains"/>
</dbReference>
<dbReference type="InterPro" id="IPR004100">
    <property type="entry name" value="ATPase_F1/V1/A1_a/bsu_N"/>
</dbReference>
<dbReference type="InterPro" id="IPR036121">
    <property type="entry name" value="ATPase_F1/V1/A1_a/bsu_N_sf"/>
</dbReference>
<dbReference type="InterPro" id="IPR000194">
    <property type="entry name" value="ATPase_F1/V1/A1_a/bsu_nucl-bd"/>
</dbReference>
<dbReference type="InterPro" id="IPR024034">
    <property type="entry name" value="ATPase_F1/V1_b/a_C"/>
</dbReference>
<dbReference type="InterPro" id="IPR027417">
    <property type="entry name" value="P-loop_NTPase"/>
</dbReference>
<dbReference type="NCBIfam" id="TIGR01039">
    <property type="entry name" value="atpD"/>
    <property type="match status" value="1"/>
</dbReference>
<dbReference type="PANTHER" id="PTHR15184">
    <property type="entry name" value="ATP SYNTHASE"/>
    <property type="match status" value="1"/>
</dbReference>
<dbReference type="PANTHER" id="PTHR15184:SF71">
    <property type="entry name" value="ATP SYNTHASE SUBUNIT BETA, MITOCHONDRIAL"/>
    <property type="match status" value="1"/>
</dbReference>
<dbReference type="Pfam" id="PF00006">
    <property type="entry name" value="ATP-synt_ab"/>
    <property type="match status" value="1"/>
</dbReference>
<dbReference type="Pfam" id="PF02874">
    <property type="entry name" value="ATP-synt_ab_N"/>
    <property type="match status" value="1"/>
</dbReference>
<dbReference type="Pfam" id="PF22919">
    <property type="entry name" value="ATP-synt_VA_C"/>
    <property type="match status" value="1"/>
</dbReference>
<dbReference type="SMART" id="SM00382">
    <property type="entry name" value="AAA"/>
    <property type="match status" value="1"/>
</dbReference>
<dbReference type="SUPFAM" id="SSF47917">
    <property type="entry name" value="C-terminal domain of alpha and beta subunits of F1 ATP synthase"/>
    <property type="match status" value="1"/>
</dbReference>
<dbReference type="SUPFAM" id="SSF50615">
    <property type="entry name" value="N-terminal domain of alpha and beta subunits of F1 ATP synthase"/>
    <property type="match status" value="1"/>
</dbReference>
<dbReference type="SUPFAM" id="SSF52540">
    <property type="entry name" value="P-loop containing nucleoside triphosphate hydrolases"/>
    <property type="match status" value="1"/>
</dbReference>
<dbReference type="PROSITE" id="PS00152">
    <property type="entry name" value="ATPASE_ALPHA_BETA"/>
    <property type="match status" value="1"/>
</dbReference>
<organism>
    <name type="scientific">Neisseria gonorrhoeae (strain NCCP11945)</name>
    <dbReference type="NCBI Taxonomy" id="521006"/>
    <lineage>
        <taxon>Bacteria</taxon>
        <taxon>Pseudomonadati</taxon>
        <taxon>Pseudomonadota</taxon>
        <taxon>Betaproteobacteria</taxon>
        <taxon>Neisseriales</taxon>
        <taxon>Neisseriaceae</taxon>
        <taxon>Neisseria</taxon>
    </lineage>
</organism>
<evidence type="ECO:0000255" key="1">
    <source>
        <dbReference type="HAMAP-Rule" id="MF_01347"/>
    </source>
</evidence>
<protein>
    <recommendedName>
        <fullName evidence="1">ATP synthase subunit beta</fullName>
        <ecNumber evidence="1">7.1.2.2</ecNumber>
    </recommendedName>
    <alternativeName>
        <fullName evidence="1">ATP synthase F1 sector subunit beta</fullName>
    </alternativeName>
    <alternativeName>
        <fullName evidence="1">F-ATPase subunit beta</fullName>
    </alternativeName>
</protein>
<reference key="1">
    <citation type="journal article" date="2008" name="J. Bacteriol.">
        <title>Complete genome sequence of Neisseria gonorrhoeae NCCP11945.</title>
        <authorList>
            <person name="Chung G.T."/>
            <person name="Yoo J.S."/>
            <person name="Oh H.B."/>
            <person name="Lee Y.S."/>
            <person name="Cha S.H."/>
            <person name="Kim S.J."/>
            <person name="Yoo C.K."/>
        </authorList>
    </citation>
    <scope>NUCLEOTIDE SEQUENCE [LARGE SCALE GENOMIC DNA]</scope>
    <source>
        <strain>NCCP11945</strain>
    </source>
</reference>
<sequence>MSQGKIVQIIGAVVDVEFPRDMIPRVYDALKLDENGLTLEVQQLLGDGVVRTIAMGSSDGLKRGMTVSNTGSPITVPVGKGTLGRIVDVLGTPVDEAGPIDTDKSRAIHQAAPKFDELSSTTELLETGIKVIDLLCPFAKGGKVGLFGGAGVGKTVNMMELINNIAKAHSGLSVFSGVGERTREGNDFYHEMKDSNVLDKVAMVYGQMNEPPGNRLRVALTGLTMAEYFRDEKDENGKGRDVLFFVDNIYRYTLAGTEVSALLGRMPSAVGYQPTLAEEMGRLQERITSTQTGSITSIQAVYVPADDLTDPSPATTFAHLDATVVLSRDIASLGIYPAVDPLDSTSRQLDPMVLGQEHYDVARGVQSTLQKYKELRDIIAILGMDELSDEDKLAVMRARKIQRFLSQPFHVAEVFTGSPGKYVALRDTIAGFKAILNGEYDHLPEQAFYMVGSIEEAVEKAKTLN</sequence>
<comment type="function">
    <text evidence="1">Produces ATP from ADP in the presence of a proton gradient across the membrane. The catalytic sites are hosted primarily by the beta subunits.</text>
</comment>
<comment type="catalytic activity">
    <reaction evidence="1">
        <text>ATP + H2O + 4 H(+)(in) = ADP + phosphate + 5 H(+)(out)</text>
        <dbReference type="Rhea" id="RHEA:57720"/>
        <dbReference type="ChEBI" id="CHEBI:15377"/>
        <dbReference type="ChEBI" id="CHEBI:15378"/>
        <dbReference type="ChEBI" id="CHEBI:30616"/>
        <dbReference type="ChEBI" id="CHEBI:43474"/>
        <dbReference type="ChEBI" id="CHEBI:456216"/>
        <dbReference type="EC" id="7.1.2.2"/>
    </reaction>
</comment>
<comment type="subunit">
    <text evidence="1">F-type ATPases have 2 components, CF(1) - the catalytic core - and CF(0) - the membrane proton channel. CF(1) has five subunits: alpha(3), beta(3), gamma(1), delta(1), epsilon(1). CF(0) has three main subunits: a(1), b(2) and c(9-12). The alpha and beta chains form an alternating ring which encloses part of the gamma chain. CF(1) is attached to CF(0) by a central stalk formed by the gamma and epsilon chains, while a peripheral stalk is formed by the delta and b chains.</text>
</comment>
<comment type="subcellular location">
    <subcellularLocation>
        <location evidence="1">Cell inner membrane</location>
        <topology evidence="1">Peripheral membrane protein</topology>
    </subcellularLocation>
</comment>
<comment type="similarity">
    <text evidence="1">Belongs to the ATPase alpha/beta chains family.</text>
</comment>
<feature type="chain" id="PRO_1000143525" description="ATP synthase subunit beta">
    <location>
        <begin position="1"/>
        <end position="465"/>
    </location>
</feature>
<feature type="binding site" evidence="1">
    <location>
        <begin position="148"/>
        <end position="155"/>
    </location>
    <ligand>
        <name>ATP</name>
        <dbReference type="ChEBI" id="CHEBI:30616"/>
    </ligand>
</feature>